<comment type="function">
    <text evidence="1">Nucleoside triphosphate pyrophosphatase that hydrolyzes 7-methyl-GTP (m(7)GTP). May have a dual role in cell division arrest and in preventing the incorporation of modified nucleotides into cellular nucleic acids.</text>
</comment>
<comment type="catalytic activity">
    <reaction evidence="1">
        <text>N(7)-methyl-GTP + H2O = N(7)-methyl-GMP + diphosphate + H(+)</text>
        <dbReference type="Rhea" id="RHEA:58744"/>
        <dbReference type="ChEBI" id="CHEBI:15377"/>
        <dbReference type="ChEBI" id="CHEBI:15378"/>
        <dbReference type="ChEBI" id="CHEBI:33019"/>
        <dbReference type="ChEBI" id="CHEBI:58285"/>
        <dbReference type="ChEBI" id="CHEBI:87133"/>
    </reaction>
</comment>
<comment type="cofactor">
    <cofactor evidence="1">
        <name>a divalent metal cation</name>
        <dbReference type="ChEBI" id="CHEBI:60240"/>
    </cofactor>
</comment>
<comment type="subcellular location">
    <subcellularLocation>
        <location evidence="1">Cytoplasm</location>
    </subcellularLocation>
</comment>
<comment type="similarity">
    <text evidence="1">Belongs to the Maf family. YceF subfamily.</text>
</comment>
<protein>
    <recommendedName>
        <fullName evidence="1">7-methyl-GTP pyrophosphatase</fullName>
        <shortName evidence="1">m(7)GTP pyrophosphatase</shortName>
        <ecNumber evidence="1">3.6.1.-</ecNumber>
    </recommendedName>
</protein>
<evidence type="ECO:0000255" key="1">
    <source>
        <dbReference type="HAMAP-Rule" id="MF_00528"/>
    </source>
</evidence>
<keyword id="KW-0963">Cytoplasm</keyword>
<keyword id="KW-0378">Hydrolase</keyword>
<keyword id="KW-0546">Nucleotide metabolism</keyword>
<feature type="chain" id="PRO_0000267387" description="7-methyl-GTP pyrophosphatase">
    <location>
        <begin position="1"/>
        <end position="199"/>
    </location>
</feature>
<feature type="active site" description="Proton acceptor" evidence="1">
    <location>
        <position position="74"/>
    </location>
</feature>
<feature type="site" description="Important for substrate specificity" evidence="1">
    <location>
        <position position="17"/>
    </location>
</feature>
<feature type="site" description="Important for substrate specificity" evidence="1">
    <location>
        <position position="75"/>
    </location>
</feature>
<feature type="site" description="Important for substrate specificity" evidence="1">
    <location>
        <position position="159"/>
    </location>
</feature>
<gene>
    <name type="ordered locus">Reut_A2269</name>
</gene>
<dbReference type="EC" id="3.6.1.-" evidence="1"/>
<dbReference type="EMBL" id="CP000090">
    <property type="protein sequence ID" value="AAZ61632.1"/>
    <property type="molecule type" value="Genomic_DNA"/>
</dbReference>
<dbReference type="SMR" id="Q46Z01"/>
<dbReference type="STRING" id="264198.Reut_A2269"/>
<dbReference type="KEGG" id="reu:Reut_A2269"/>
<dbReference type="eggNOG" id="COG0424">
    <property type="taxonomic scope" value="Bacteria"/>
</dbReference>
<dbReference type="HOGENOM" id="CLU_040416_1_0_4"/>
<dbReference type="OrthoDB" id="9813694at2"/>
<dbReference type="GO" id="GO:0005737">
    <property type="term" value="C:cytoplasm"/>
    <property type="evidence" value="ECO:0007669"/>
    <property type="project" value="UniProtKB-SubCell"/>
</dbReference>
<dbReference type="GO" id="GO:0047429">
    <property type="term" value="F:nucleoside triphosphate diphosphatase activity"/>
    <property type="evidence" value="ECO:0007669"/>
    <property type="project" value="InterPro"/>
</dbReference>
<dbReference type="GO" id="GO:0009117">
    <property type="term" value="P:nucleotide metabolic process"/>
    <property type="evidence" value="ECO:0007669"/>
    <property type="project" value="UniProtKB-KW"/>
</dbReference>
<dbReference type="CDD" id="cd00555">
    <property type="entry name" value="Maf"/>
    <property type="match status" value="1"/>
</dbReference>
<dbReference type="FunFam" id="3.90.950.10:FF:000005">
    <property type="entry name" value="7-methyl-GTP pyrophosphatase"/>
    <property type="match status" value="1"/>
</dbReference>
<dbReference type="Gene3D" id="3.90.950.10">
    <property type="match status" value="1"/>
</dbReference>
<dbReference type="HAMAP" id="MF_00528">
    <property type="entry name" value="Maf"/>
    <property type="match status" value="1"/>
</dbReference>
<dbReference type="InterPro" id="IPR029001">
    <property type="entry name" value="ITPase-like_fam"/>
</dbReference>
<dbReference type="InterPro" id="IPR003697">
    <property type="entry name" value="Maf-like"/>
</dbReference>
<dbReference type="NCBIfam" id="TIGR00172">
    <property type="entry name" value="maf"/>
    <property type="match status" value="1"/>
</dbReference>
<dbReference type="PANTHER" id="PTHR43213">
    <property type="entry name" value="BIFUNCTIONAL DTTP/UTP PYROPHOSPHATASE/METHYLTRANSFERASE PROTEIN-RELATED"/>
    <property type="match status" value="1"/>
</dbReference>
<dbReference type="PANTHER" id="PTHR43213:SF5">
    <property type="entry name" value="BIFUNCTIONAL DTTP_UTP PYROPHOSPHATASE_METHYLTRANSFERASE PROTEIN-RELATED"/>
    <property type="match status" value="1"/>
</dbReference>
<dbReference type="Pfam" id="PF02545">
    <property type="entry name" value="Maf"/>
    <property type="match status" value="1"/>
</dbReference>
<dbReference type="PIRSF" id="PIRSF006305">
    <property type="entry name" value="Maf"/>
    <property type="match status" value="1"/>
</dbReference>
<dbReference type="SUPFAM" id="SSF52972">
    <property type="entry name" value="ITPase-like"/>
    <property type="match status" value="1"/>
</dbReference>
<accession>Q46Z01</accession>
<organism>
    <name type="scientific">Cupriavidus pinatubonensis (strain JMP 134 / LMG 1197)</name>
    <name type="common">Cupriavidus necator (strain JMP 134)</name>
    <dbReference type="NCBI Taxonomy" id="264198"/>
    <lineage>
        <taxon>Bacteria</taxon>
        <taxon>Pseudomonadati</taxon>
        <taxon>Pseudomonadota</taxon>
        <taxon>Betaproteobacteria</taxon>
        <taxon>Burkholderiales</taxon>
        <taxon>Burkholderiaceae</taxon>
        <taxon>Cupriavidus</taxon>
    </lineage>
</organism>
<name>NTPPB_CUPPJ</name>
<proteinExistence type="inferred from homology"/>
<sequence>MTSTPLPRLILGSSSPYRRELLERLRLTFEVAVPDINETPLAGESPEATALRLSLNKAQAIAQRHPDALIIGSDQVLTLDGRQMGKPGSHDKAREQLRLMRGRTATFHSALCLLDGRTGQSQLADVQTRVTMRDLTDAEIDAYLRLEKPYDVAGSAKSEGLGIALLSRVESDDPTALVGLPLIALTSMLRQSGYPFFAA</sequence>
<reference key="1">
    <citation type="journal article" date="2010" name="PLoS ONE">
        <title>The complete multipartite genome sequence of Cupriavidus necator JMP134, a versatile pollutant degrader.</title>
        <authorList>
            <person name="Lykidis A."/>
            <person name="Perez-Pantoja D."/>
            <person name="Ledger T."/>
            <person name="Mavromatis K."/>
            <person name="Anderson I.J."/>
            <person name="Ivanova N.N."/>
            <person name="Hooper S.D."/>
            <person name="Lapidus A."/>
            <person name="Lucas S."/>
            <person name="Gonzalez B."/>
            <person name="Kyrpides N.C."/>
        </authorList>
    </citation>
    <scope>NUCLEOTIDE SEQUENCE [LARGE SCALE GENOMIC DNA]</scope>
    <source>
        <strain>JMP134 / LMG 1197</strain>
    </source>
</reference>